<protein>
    <recommendedName>
        <fullName evidence="1">S-adenosylmethionine decarboxylase proenzyme</fullName>
        <shortName evidence="1">AdoMetDC</shortName>
        <shortName evidence="1">SAMDC</shortName>
        <ecNumber evidence="1">4.1.1.50</ecNumber>
    </recommendedName>
    <component>
        <recommendedName>
            <fullName evidence="1">S-adenosylmethionine decarboxylase beta chain</fullName>
        </recommendedName>
    </component>
    <component>
        <recommendedName>
            <fullName evidence="1">S-adenosylmethionine decarboxylase alpha chain</fullName>
        </recommendedName>
    </component>
</protein>
<evidence type="ECO:0000255" key="1">
    <source>
        <dbReference type="HAMAP-Rule" id="MF_00465"/>
    </source>
</evidence>
<name>SPED_GEOTN</name>
<keyword id="KW-0068">Autocatalytic cleavage</keyword>
<keyword id="KW-0210">Decarboxylase</keyword>
<keyword id="KW-0456">Lyase</keyword>
<keyword id="KW-0620">Polyamine biosynthesis</keyword>
<keyword id="KW-0670">Pyruvate</keyword>
<keyword id="KW-0949">S-adenosyl-L-methionine</keyword>
<keyword id="KW-0704">Schiff base</keyword>
<keyword id="KW-0745">Spermidine biosynthesis</keyword>
<keyword id="KW-0865">Zymogen</keyword>
<proteinExistence type="inferred from homology"/>
<organism>
    <name type="scientific">Geobacillus thermodenitrificans (strain NG80-2)</name>
    <dbReference type="NCBI Taxonomy" id="420246"/>
    <lineage>
        <taxon>Bacteria</taxon>
        <taxon>Bacillati</taxon>
        <taxon>Bacillota</taxon>
        <taxon>Bacilli</taxon>
        <taxon>Bacillales</taxon>
        <taxon>Anoxybacillaceae</taxon>
        <taxon>Geobacillus</taxon>
    </lineage>
</organism>
<accession>A4IMR9</accession>
<comment type="function">
    <text evidence="1">Catalyzes the decarboxylation of S-adenosylmethionine to S-adenosylmethioninamine (dcAdoMet), the propylamine donor required for the synthesis of the polyamines spermine and spermidine from the diamine putrescine.</text>
</comment>
<comment type="catalytic activity">
    <reaction evidence="1">
        <text>S-adenosyl-L-methionine + H(+) = S-adenosyl 3-(methylsulfanyl)propylamine + CO2</text>
        <dbReference type="Rhea" id="RHEA:15981"/>
        <dbReference type="ChEBI" id="CHEBI:15378"/>
        <dbReference type="ChEBI" id="CHEBI:16526"/>
        <dbReference type="ChEBI" id="CHEBI:57443"/>
        <dbReference type="ChEBI" id="CHEBI:59789"/>
        <dbReference type="EC" id="4.1.1.50"/>
    </reaction>
</comment>
<comment type="cofactor">
    <cofactor evidence="1">
        <name>pyruvate</name>
        <dbReference type="ChEBI" id="CHEBI:15361"/>
    </cofactor>
    <text evidence="1">Binds 1 pyruvoyl group covalently per subunit.</text>
</comment>
<comment type="pathway">
    <text evidence="1">Amine and polyamine biosynthesis; S-adenosylmethioninamine biosynthesis; S-adenosylmethioninamine from S-adenosyl-L-methionine: step 1/1.</text>
</comment>
<comment type="subunit">
    <text evidence="1">Heterooctamer of four alpha and four beta chains arranged as a tetramer of alpha/beta heterodimers.</text>
</comment>
<comment type="PTM">
    <text evidence="1">Is synthesized initially as an inactive proenzyme. Formation of the active enzyme involves a self-maturation process in which the active site pyruvoyl group is generated from an internal serine residue via an autocatalytic post-translational modification. Two non-identical subunits are generated from the proenzyme in this reaction, and the pyruvate is formed at the N-terminus of the alpha chain, which is derived from the carboxyl end of the proenzyme. The post-translation cleavage follows an unusual pathway, termed non-hydrolytic serinolysis, in which the side chain hydroxyl group of the serine supplies its oxygen atom to form the C-terminus of the beta chain, while the remainder of the serine residue undergoes an oxidative deamination to produce ammonia and the pyruvoyl group blocking the N-terminus of the alpha chain.</text>
</comment>
<comment type="similarity">
    <text evidence="1">Belongs to the prokaryotic AdoMetDC family. Type 2 subfamily.</text>
</comment>
<sequence>MNDTPHVKLHGFNNLTKSLSFNMYDICYTKTPKEREAYISYIDDVYNAERLTNILKHVADIIGAHVLNIAKQDYVPQGASVTMLVSEGPVVEVPQAEAPLPEAVVLSLDKSHITVHTYPEYHPSDGISTFRADIDVVTCGEISPLKALDYLIQSFEADIMIIDYRVRGFTRDIHGYKLFIDHDITSIQNYIPEDIREKYDMIDVNIYQENIFHTKCKLRQFDLDNYLFGHTKDALSKQEVEETTAKLKREMDEIFYGKNMPSGF</sequence>
<feature type="chain" id="PRO_0000364381" description="S-adenosylmethionine decarboxylase beta chain" evidence="1">
    <location>
        <begin position="1"/>
        <end position="110"/>
    </location>
</feature>
<feature type="chain" id="PRO_0000364382" description="S-adenosylmethionine decarboxylase alpha chain" evidence="1">
    <location>
        <begin position="111"/>
        <end position="264"/>
    </location>
</feature>
<feature type="active site" description="Schiff-base intermediate with substrate; via pyruvic acid" evidence="1">
    <location>
        <position position="111"/>
    </location>
</feature>
<feature type="active site" description="Proton acceptor; for processing activity" evidence="1">
    <location>
        <position position="116"/>
    </location>
</feature>
<feature type="active site" description="Proton donor; for catalytic activity" evidence="1">
    <location>
        <position position="139"/>
    </location>
</feature>
<feature type="site" description="Cleavage (non-hydrolytic); by autolysis" evidence="1">
    <location>
        <begin position="110"/>
        <end position="111"/>
    </location>
</feature>
<feature type="modified residue" description="Pyruvic acid (Ser); by autocatalysis" evidence="1">
    <location>
        <position position="111"/>
    </location>
</feature>
<gene>
    <name evidence="1" type="primary">speD</name>
    <name type="ordered locus">GTNG_1253</name>
</gene>
<reference key="1">
    <citation type="journal article" date="2007" name="Proc. Natl. Acad. Sci. U.S.A.">
        <title>Genome and proteome of long-chain alkane degrading Geobacillus thermodenitrificans NG80-2 isolated from a deep-subsurface oil reservoir.</title>
        <authorList>
            <person name="Feng L."/>
            <person name="Wang W."/>
            <person name="Cheng J."/>
            <person name="Ren Y."/>
            <person name="Zhao G."/>
            <person name="Gao C."/>
            <person name="Tang Y."/>
            <person name="Liu X."/>
            <person name="Han W."/>
            <person name="Peng X."/>
            <person name="Liu R."/>
            <person name="Wang L."/>
        </authorList>
    </citation>
    <scope>NUCLEOTIDE SEQUENCE [LARGE SCALE GENOMIC DNA]</scope>
    <source>
        <strain>NG80-2</strain>
    </source>
</reference>
<dbReference type="EC" id="4.1.1.50" evidence="1"/>
<dbReference type="EMBL" id="CP000557">
    <property type="protein sequence ID" value="ABO66623.1"/>
    <property type="molecule type" value="Genomic_DNA"/>
</dbReference>
<dbReference type="RefSeq" id="WP_011887234.1">
    <property type="nucleotide sequence ID" value="NC_009328.1"/>
</dbReference>
<dbReference type="SMR" id="A4IMR9"/>
<dbReference type="KEGG" id="gtn:GTNG_1253"/>
<dbReference type="eggNOG" id="COG1586">
    <property type="taxonomic scope" value="Bacteria"/>
</dbReference>
<dbReference type="HOGENOM" id="CLU_092007_0_0_9"/>
<dbReference type="UniPathway" id="UPA00331">
    <property type="reaction ID" value="UER00451"/>
</dbReference>
<dbReference type="Proteomes" id="UP000001578">
    <property type="component" value="Chromosome"/>
</dbReference>
<dbReference type="GO" id="GO:0005829">
    <property type="term" value="C:cytosol"/>
    <property type="evidence" value="ECO:0007669"/>
    <property type="project" value="TreeGrafter"/>
</dbReference>
<dbReference type="GO" id="GO:0004014">
    <property type="term" value="F:adenosylmethionine decarboxylase activity"/>
    <property type="evidence" value="ECO:0007669"/>
    <property type="project" value="UniProtKB-UniRule"/>
</dbReference>
<dbReference type="GO" id="GO:0008295">
    <property type="term" value="P:spermidine biosynthetic process"/>
    <property type="evidence" value="ECO:0007669"/>
    <property type="project" value="UniProtKB-UniRule"/>
</dbReference>
<dbReference type="Gene3D" id="3.60.90.10">
    <property type="entry name" value="S-adenosylmethionine decarboxylase"/>
    <property type="match status" value="1"/>
</dbReference>
<dbReference type="HAMAP" id="MF_00465">
    <property type="entry name" value="AdoMetDC_2"/>
    <property type="match status" value="1"/>
</dbReference>
<dbReference type="InterPro" id="IPR003826">
    <property type="entry name" value="AdoMetDC_fam_prok"/>
</dbReference>
<dbReference type="InterPro" id="IPR009165">
    <property type="entry name" value="S-AdoMet_deCO2ase_bac"/>
</dbReference>
<dbReference type="InterPro" id="IPR016067">
    <property type="entry name" value="S-AdoMet_deCO2ase_core"/>
</dbReference>
<dbReference type="NCBIfam" id="TIGR03331">
    <property type="entry name" value="SAM_DCase_Eco"/>
    <property type="match status" value="1"/>
</dbReference>
<dbReference type="PANTHER" id="PTHR33866">
    <property type="entry name" value="S-ADENOSYLMETHIONINE DECARBOXYLASE PROENZYME"/>
    <property type="match status" value="1"/>
</dbReference>
<dbReference type="PANTHER" id="PTHR33866:SF1">
    <property type="entry name" value="S-ADENOSYLMETHIONINE DECARBOXYLASE PROENZYME"/>
    <property type="match status" value="1"/>
</dbReference>
<dbReference type="Pfam" id="PF02675">
    <property type="entry name" value="AdoMet_dc"/>
    <property type="match status" value="1"/>
</dbReference>
<dbReference type="PIRSF" id="PIRSF001356">
    <property type="entry name" value="SAM_decarboxylas"/>
    <property type="match status" value="1"/>
</dbReference>
<dbReference type="SUPFAM" id="SSF56276">
    <property type="entry name" value="S-adenosylmethionine decarboxylase"/>
    <property type="match status" value="1"/>
</dbReference>